<keyword id="KW-0067">ATP-binding</keyword>
<keyword id="KW-0173">Coenzyme A biosynthesis</keyword>
<keyword id="KW-0963">Cytoplasm</keyword>
<keyword id="KW-0460">Magnesium</keyword>
<keyword id="KW-0547">Nucleotide-binding</keyword>
<keyword id="KW-0548">Nucleotidyltransferase</keyword>
<keyword id="KW-0808">Transferase</keyword>
<accession>Q1BTG1</accession>
<sequence>MVVAVYPGTFDPLTRGHEDLVRRASSIFDTLVVGVADSRAKKPFFSLEERLTIANEVLGHYPNVKVMSFTGLLKDFVRVNNARVIVRGLRAVSDFEYEFQMAGMNRYLLPDVETMFMTPSDQYQFISGTIVREIAQLGGDVSKFVFPSVEKWLTEKVTAMGGPAA</sequence>
<name>COAD_BURO1</name>
<proteinExistence type="inferred from homology"/>
<gene>
    <name evidence="1" type="primary">coaD</name>
    <name type="ordered locus">Bcen_2193</name>
</gene>
<evidence type="ECO:0000255" key="1">
    <source>
        <dbReference type="HAMAP-Rule" id="MF_00151"/>
    </source>
</evidence>
<comment type="function">
    <text evidence="1">Reversibly transfers an adenylyl group from ATP to 4'-phosphopantetheine, yielding dephospho-CoA (dPCoA) and pyrophosphate.</text>
</comment>
<comment type="catalytic activity">
    <reaction evidence="1">
        <text>(R)-4'-phosphopantetheine + ATP + H(+) = 3'-dephospho-CoA + diphosphate</text>
        <dbReference type="Rhea" id="RHEA:19801"/>
        <dbReference type="ChEBI" id="CHEBI:15378"/>
        <dbReference type="ChEBI" id="CHEBI:30616"/>
        <dbReference type="ChEBI" id="CHEBI:33019"/>
        <dbReference type="ChEBI" id="CHEBI:57328"/>
        <dbReference type="ChEBI" id="CHEBI:61723"/>
        <dbReference type="EC" id="2.7.7.3"/>
    </reaction>
</comment>
<comment type="cofactor">
    <cofactor evidence="1">
        <name>Mg(2+)</name>
        <dbReference type="ChEBI" id="CHEBI:18420"/>
    </cofactor>
</comment>
<comment type="pathway">
    <text evidence="1">Cofactor biosynthesis; coenzyme A biosynthesis; CoA from (R)-pantothenate: step 4/5.</text>
</comment>
<comment type="subunit">
    <text evidence="1">Homohexamer.</text>
</comment>
<comment type="subcellular location">
    <subcellularLocation>
        <location evidence="1">Cytoplasm</location>
    </subcellularLocation>
</comment>
<comment type="similarity">
    <text evidence="1">Belongs to the bacterial CoaD family.</text>
</comment>
<protein>
    <recommendedName>
        <fullName evidence="1">Phosphopantetheine adenylyltransferase</fullName>
        <ecNumber evidence="1">2.7.7.3</ecNumber>
    </recommendedName>
    <alternativeName>
        <fullName evidence="1">Dephospho-CoA pyrophosphorylase</fullName>
    </alternativeName>
    <alternativeName>
        <fullName evidence="1">Pantetheine-phosphate adenylyltransferase</fullName>
        <shortName evidence="1">PPAT</shortName>
    </alternativeName>
</protein>
<reference key="1">
    <citation type="submission" date="2006-05" db="EMBL/GenBank/DDBJ databases">
        <title>Complete sequence of chromosome 1 of Burkholderia cenocepacia AU 1054.</title>
        <authorList>
            <consortium name="US DOE Joint Genome Institute"/>
            <person name="Copeland A."/>
            <person name="Lucas S."/>
            <person name="Lapidus A."/>
            <person name="Barry K."/>
            <person name="Detter J.C."/>
            <person name="Glavina del Rio T."/>
            <person name="Hammon N."/>
            <person name="Israni S."/>
            <person name="Dalin E."/>
            <person name="Tice H."/>
            <person name="Pitluck S."/>
            <person name="Chain P."/>
            <person name="Malfatti S."/>
            <person name="Shin M."/>
            <person name="Vergez L."/>
            <person name="Schmutz J."/>
            <person name="Larimer F."/>
            <person name="Land M."/>
            <person name="Hauser L."/>
            <person name="Kyrpides N."/>
            <person name="Lykidis A."/>
            <person name="LiPuma J.J."/>
            <person name="Konstantinidis K."/>
            <person name="Tiedje J.M."/>
            <person name="Richardson P."/>
        </authorList>
    </citation>
    <scope>NUCLEOTIDE SEQUENCE [LARGE SCALE GENOMIC DNA]</scope>
    <source>
        <strain>AU 1054</strain>
    </source>
</reference>
<dbReference type="EC" id="2.7.7.3" evidence="1"/>
<dbReference type="EMBL" id="CP000378">
    <property type="protein sequence ID" value="ABF77094.1"/>
    <property type="molecule type" value="Genomic_DNA"/>
</dbReference>
<dbReference type="SMR" id="Q1BTG1"/>
<dbReference type="HOGENOM" id="CLU_100149_0_1_4"/>
<dbReference type="UniPathway" id="UPA00241">
    <property type="reaction ID" value="UER00355"/>
</dbReference>
<dbReference type="GO" id="GO:0005737">
    <property type="term" value="C:cytoplasm"/>
    <property type="evidence" value="ECO:0007669"/>
    <property type="project" value="UniProtKB-SubCell"/>
</dbReference>
<dbReference type="GO" id="GO:0005524">
    <property type="term" value="F:ATP binding"/>
    <property type="evidence" value="ECO:0007669"/>
    <property type="project" value="UniProtKB-KW"/>
</dbReference>
<dbReference type="GO" id="GO:0004595">
    <property type="term" value="F:pantetheine-phosphate adenylyltransferase activity"/>
    <property type="evidence" value="ECO:0007669"/>
    <property type="project" value="UniProtKB-UniRule"/>
</dbReference>
<dbReference type="GO" id="GO:0015937">
    <property type="term" value="P:coenzyme A biosynthetic process"/>
    <property type="evidence" value="ECO:0007669"/>
    <property type="project" value="UniProtKB-UniRule"/>
</dbReference>
<dbReference type="CDD" id="cd02163">
    <property type="entry name" value="PPAT"/>
    <property type="match status" value="1"/>
</dbReference>
<dbReference type="Gene3D" id="3.40.50.620">
    <property type="entry name" value="HUPs"/>
    <property type="match status" value="1"/>
</dbReference>
<dbReference type="HAMAP" id="MF_00151">
    <property type="entry name" value="PPAT_bact"/>
    <property type="match status" value="1"/>
</dbReference>
<dbReference type="InterPro" id="IPR004821">
    <property type="entry name" value="Cyt_trans-like"/>
</dbReference>
<dbReference type="InterPro" id="IPR001980">
    <property type="entry name" value="PPAT"/>
</dbReference>
<dbReference type="InterPro" id="IPR014729">
    <property type="entry name" value="Rossmann-like_a/b/a_fold"/>
</dbReference>
<dbReference type="NCBIfam" id="TIGR01510">
    <property type="entry name" value="coaD_prev_kdtB"/>
    <property type="match status" value="1"/>
</dbReference>
<dbReference type="NCBIfam" id="TIGR00125">
    <property type="entry name" value="cyt_tran_rel"/>
    <property type="match status" value="1"/>
</dbReference>
<dbReference type="PANTHER" id="PTHR21342">
    <property type="entry name" value="PHOSPHOPANTETHEINE ADENYLYLTRANSFERASE"/>
    <property type="match status" value="1"/>
</dbReference>
<dbReference type="PANTHER" id="PTHR21342:SF1">
    <property type="entry name" value="PHOSPHOPANTETHEINE ADENYLYLTRANSFERASE"/>
    <property type="match status" value="1"/>
</dbReference>
<dbReference type="Pfam" id="PF01467">
    <property type="entry name" value="CTP_transf_like"/>
    <property type="match status" value="1"/>
</dbReference>
<dbReference type="PRINTS" id="PR01020">
    <property type="entry name" value="LPSBIOSNTHSS"/>
</dbReference>
<dbReference type="SUPFAM" id="SSF52374">
    <property type="entry name" value="Nucleotidylyl transferase"/>
    <property type="match status" value="1"/>
</dbReference>
<organism>
    <name type="scientific">Burkholderia orbicola (strain AU 1054)</name>
    <dbReference type="NCBI Taxonomy" id="331271"/>
    <lineage>
        <taxon>Bacteria</taxon>
        <taxon>Pseudomonadati</taxon>
        <taxon>Pseudomonadota</taxon>
        <taxon>Betaproteobacteria</taxon>
        <taxon>Burkholderiales</taxon>
        <taxon>Burkholderiaceae</taxon>
        <taxon>Burkholderia</taxon>
        <taxon>Burkholderia cepacia complex</taxon>
        <taxon>Burkholderia orbicola</taxon>
    </lineage>
</organism>
<feature type="chain" id="PRO_1000011103" description="Phosphopantetheine adenylyltransferase">
    <location>
        <begin position="1"/>
        <end position="165"/>
    </location>
</feature>
<feature type="binding site" evidence="1">
    <location>
        <begin position="9"/>
        <end position="10"/>
    </location>
    <ligand>
        <name>ATP</name>
        <dbReference type="ChEBI" id="CHEBI:30616"/>
    </ligand>
</feature>
<feature type="binding site" evidence="1">
    <location>
        <position position="9"/>
    </location>
    <ligand>
        <name>substrate</name>
    </ligand>
</feature>
<feature type="binding site" evidence="1">
    <location>
        <position position="17"/>
    </location>
    <ligand>
        <name>ATP</name>
        <dbReference type="ChEBI" id="CHEBI:30616"/>
    </ligand>
</feature>
<feature type="binding site" evidence="1">
    <location>
        <position position="41"/>
    </location>
    <ligand>
        <name>substrate</name>
    </ligand>
</feature>
<feature type="binding site" evidence="1">
    <location>
        <position position="73"/>
    </location>
    <ligand>
        <name>substrate</name>
    </ligand>
</feature>
<feature type="binding site" evidence="1">
    <location>
        <position position="87"/>
    </location>
    <ligand>
        <name>substrate</name>
    </ligand>
</feature>
<feature type="binding site" evidence="1">
    <location>
        <begin position="88"/>
        <end position="90"/>
    </location>
    <ligand>
        <name>ATP</name>
        <dbReference type="ChEBI" id="CHEBI:30616"/>
    </ligand>
</feature>
<feature type="binding site" evidence="1">
    <location>
        <position position="98"/>
    </location>
    <ligand>
        <name>ATP</name>
        <dbReference type="ChEBI" id="CHEBI:30616"/>
    </ligand>
</feature>
<feature type="binding site" evidence="1">
    <location>
        <begin position="123"/>
        <end position="129"/>
    </location>
    <ligand>
        <name>ATP</name>
        <dbReference type="ChEBI" id="CHEBI:30616"/>
    </ligand>
</feature>
<feature type="site" description="Transition state stabilizer" evidence="1">
    <location>
        <position position="17"/>
    </location>
</feature>